<feature type="chain" id="PRO_0000161861" description="tRNA/tmRNA (uracil-C(5))-methyltransferase">
    <location>
        <begin position="1"/>
        <end position="366"/>
    </location>
</feature>
<feature type="active site" description="Nucleophile" evidence="1">
    <location>
        <position position="324"/>
    </location>
</feature>
<feature type="active site" description="Proton acceptor" evidence="1">
    <location>
        <position position="358"/>
    </location>
</feature>
<feature type="binding site" evidence="1">
    <location>
        <position position="190"/>
    </location>
    <ligand>
        <name>S-adenosyl-L-methionine</name>
        <dbReference type="ChEBI" id="CHEBI:59789"/>
    </ligand>
</feature>
<feature type="binding site" evidence="1">
    <location>
        <position position="218"/>
    </location>
    <ligand>
        <name>S-adenosyl-L-methionine</name>
        <dbReference type="ChEBI" id="CHEBI:59789"/>
    </ligand>
</feature>
<feature type="binding site" evidence="1">
    <location>
        <position position="223"/>
    </location>
    <ligand>
        <name>S-adenosyl-L-methionine</name>
        <dbReference type="ChEBI" id="CHEBI:59789"/>
    </ligand>
</feature>
<feature type="binding site" evidence="1">
    <location>
        <position position="239"/>
    </location>
    <ligand>
        <name>S-adenosyl-L-methionine</name>
        <dbReference type="ChEBI" id="CHEBI:59789"/>
    </ligand>
</feature>
<feature type="binding site" evidence="1">
    <location>
        <position position="299"/>
    </location>
    <ligand>
        <name>S-adenosyl-L-methionine</name>
        <dbReference type="ChEBI" id="CHEBI:59789"/>
    </ligand>
</feature>
<keyword id="KW-0489">Methyltransferase</keyword>
<keyword id="KW-1185">Reference proteome</keyword>
<keyword id="KW-0949">S-adenosyl-L-methionine</keyword>
<keyword id="KW-0808">Transferase</keyword>
<keyword id="KW-0819">tRNA processing</keyword>
<organism>
    <name type="scientific">Escherichia coli O157:H7</name>
    <dbReference type="NCBI Taxonomy" id="83334"/>
    <lineage>
        <taxon>Bacteria</taxon>
        <taxon>Pseudomonadati</taxon>
        <taxon>Pseudomonadota</taxon>
        <taxon>Gammaproteobacteria</taxon>
        <taxon>Enterobacterales</taxon>
        <taxon>Enterobacteriaceae</taxon>
        <taxon>Escherichia</taxon>
    </lineage>
</organism>
<name>TRMA_ECO57</name>
<sequence length="366" mass="41909">MTPEHLPTEQYEAQLAEKVVRLQSMMAPFSDLVPEVFRSPVSHYRMRAEFRIWHDGDDLYHIIFDQQTKSRIRVDSFPAASELINQLMTAMIAGVRNNPVLRHKLFQIDYLTTLSNQAVVSLLYHKKLDDEWRQEAEALRDALRAQNLNVHLIGRATKTKIALDQDYIDERLPVAGKEMIYRQVENSFTQPNAAMNIQMLEWALDVTKGSKGDLLELYCGNGNFSLALARNFDRVLATEIAKPSVAAAQYNIAANHIDNVQIIRMAAEEFTQAMNGVREFNRLQGIDLKSYQCETIFVDPPRSGLDSETEKMVQAYPRILYISCNPETLCKNLETLSQTHKVERLALFDQFPYTHHMECGVLLTAK</sequence>
<evidence type="ECO:0000255" key="1">
    <source>
        <dbReference type="HAMAP-Rule" id="MF_01011"/>
    </source>
</evidence>
<comment type="function">
    <text evidence="1">Dual-specificity methyltransferase that catalyzes the formation of 5-methyluridine at position 54 (m5U54) in all tRNAs, and that of position 341 (m5U341) in tmRNA (transfer-mRNA).</text>
</comment>
<comment type="catalytic activity">
    <reaction evidence="1">
        <text>uridine(54) in tRNA + S-adenosyl-L-methionine = 5-methyluridine(54) in tRNA + S-adenosyl-L-homocysteine + H(+)</text>
        <dbReference type="Rhea" id="RHEA:42712"/>
        <dbReference type="Rhea" id="RHEA-COMP:10167"/>
        <dbReference type="Rhea" id="RHEA-COMP:10193"/>
        <dbReference type="ChEBI" id="CHEBI:15378"/>
        <dbReference type="ChEBI" id="CHEBI:57856"/>
        <dbReference type="ChEBI" id="CHEBI:59789"/>
        <dbReference type="ChEBI" id="CHEBI:65315"/>
        <dbReference type="ChEBI" id="CHEBI:74447"/>
        <dbReference type="EC" id="2.1.1.35"/>
    </reaction>
</comment>
<comment type="catalytic activity">
    <reaction evidence="1">
        <text>uridine(341) in tmRNA + S-adenosyl-L-methionine = 5-methyluridine(341) in tmRNA + S-adenosyl-L-homocysteine + H(+)</text>
        <dbReference type="Rhea" id="RHEA:43612"/>
        <dbReference type="Rhea" id="RHEA-COMP:10630"/>
        <dbReference type="Rhea" id="RHEA-COMP:10631"/>
        <dbReference type="ChEBI" id="CHEBI:15378"/>
        <dbReference type="ChEBI" id="CHEBI:57856"/>
        <dbReference type="ChEBI" id="CHEBI:59789"/>
        <dbReference type="ChEBI" id="CHEBI:65315"/>
        <dbReference type="ChEBI" id="CHEBI:74447"/>
    </reaction>
</comment>
<comment type="similarity">
    <text evidence="1">Belongs to the class I-like SAM-binding methyltransferase superfamily. RNA M5U methyltransferase family. TrmA subfamily.</text>
</comment>
<gene>
    <name evidence="1" type="primary">trmA</name>
    <name type="ordered locus">Z5526</name>
    <name type="ordered locus">ECs4896</name>
</gene>
<protein>
    <recommendedName>
        <fullName evidence="1">tRNA/tmRNA (uracil-C(5))-methyltransferase</fullName>
        <ecNumber evidence="1">2.1.1.-</ecNumber>
        <ecNumber evidence="1">2.1.1.35</ecNumber>
    </recommendedName>
    <alternativeName>
        <fullName evidence="1">tRNA (uracil(54)-C(5))-methyltransferase</fullName>
    </alternativeName>
    <alternativeName>
        <fullName evidence="1">tRNA(m5U54)-methyltransferase</fullName>
        <shortName evidence="1">RUMT</shortName>
    </alternativeName>
    <alternativeName>
        <fullName evidence="1">tmRNA (uracil(341)-C(5))-methyltransferase</fullName>
    </alternativeName>
</protein>
<proteinExistence type="inferred from homology"/>
<dbReference type="EC" id="2.1.1.-" evidence="1"/>
<dbReference type="EC" id="2.1.1.35" evidence="1"/>
<dbReference type="EMBL" id="AE005174">
    <property type="protein sequence ID" value="AAG59169.1"/>
    <property type="molecule type" value="Genomic_DNA"/>
</dbReference>
<dbReference type="EMBL" id="BA000007">
    <property type="protein sequence ID" value="BAB38319.1"/>
    <property type="molecule type" value="Genomic_DNA"/>
</dbReference>
<dbReference type="PIR" id="E86088">
    <property type="entry name" value="E86088"/>
</dbReference>
<dbReference type="PIR" id="H91240">
    <property type="entry name" value="H91240"/>
</dbReference>
<dbReference type="RefSeq" id="NP_312923.1">
    <property type="nucleotide sequence ID" value="NC_002695.1"/>
</dbReference>
<dbReference type="RefSeq" id="WP_000187008.1">
    <property type="nucleotide sequence ID" value="NZ_VOAI01000032.1"/>
</dbReference>
<dbReference type="SMR" id="Q8X723"/>
<dbReference type="STRING" id="155864.Z5526"/>
<dbReference type="GeneID" id="75169411"/>
<dbReference type="GeneID" id="914980"/>
<dbReference type="KEGG" id="ece:Z5526"/>
<dbReference type="KEGG" id="ecs:ECs_4896"/>
<dbReference type="PATRIC" id="fig|386585.9.peg.5120"/>
<dbReference type="eggNOG" id="COG2265">
    <property type="taxonomic scope" value="Bacteria"/>
</dbReference>
<dbReference type="HOGENOM" id="CLU_043022_0_0_6"/>
<dbReference type="OMA" id="QCNTIFV"/>
<dbReference type="Proteomes" id="UP000000558">
    <property type="component" value="Chromosome"/>
</dbReference>
<dbReference type="Proteomes" id="UP000002519">
    <property type="component" value="Chromosome"/>
</dbReference>
<dbReference type="GO" id="GO:0005829">
    <property type="term" value="C:cytosol"/>
    <property type="evidence" value="ECO:0007669"/>
    <property type="project" value="TreeGrafter"/>
</dbReference>
<dbReference type="GO" id="GO:0019843">
    <property type="term" value="F:rRNA binding"/>
    <property type="evidence" value="ECO:0007669"/>
    <property type="project" value="TreeGrafter"/>
</dbReference>
<dbReference type="GO" id="GO:0030697">
    <property type="term" value="F:tRNA (uracil(54)-C5)-methyltransferase activity, S-adenosyl methionine-dependent"/>
    <property type="evidence" value="ECO:0007669"/>
    <property type="project" value="UniProtKB-UniRule"/>
</dbReference>
<dbReference type="GO" id="GO:0000049">
    <property type="term" value="F:tRNA binding"/>
    <property type="evidence" value="ECO:0007669"/>
    <property type="project" value="TreeGrafter"/>
</dbReference>
<dbReference type="GO" id="GO:0030488">
    <property type="term" value="P:tRNA methylation"/>
    <property type="evidence" value="ECO:0007669"/>
    <property type="project" value="UniProtKB-UniRule"/>
</dbReference>
<dbReference type="CDD" id="cd02440">
    <property type="entry name" value="AdoMet_MTases"/>
    <property type="match status" value="1"/>
</dbReference>
<dbReference type="FunFam" id="2.40.50.1070:FF:000001">
    <property type="entry name" value="tRNA/tmRNA (uracil-C(5))-methyltransferase"/>
    <property type="match status" value="1"/>
</dbReference>
<dbReference type="FunFam" id="3.40.50.150:FF:000012">
    <property type="entry name" value="tRNA/tmRNA (uracil-C(5))-methyltransferase"/>
    <property type="match status" value="1"/>
</dbReference>
<dbReference type="Gene3D" id="2.40.50.1070">
    <property type="match status" value="1"/>
</dbReference>
<dbReference type="Gene3D" id="3.40.50.150">
    <property type="entry name" value="Vaccinia Virus protein VP39"/>
    <property type="match status" value="1"/>
</dbReference>
<dbReference type="HAMAP" id="MF_01011">
    <property type="entry name" value="RNA_methyltr_TrmA"/>
    <property type="match status" value="1"/>
</dbReference>
<dbReference type="InterPro" id="IPR030390">
    <property type="entry name" value="MeTrfase_TrmA_AS"/>
</dbReference>
<dbReference type="InterPro" id="IPR030391">
    <property type="entry name" value="MeTrfase_TrmA_CS"/>
</dbReference>
<dbReference type="InterPro" id="IPR029063">
    <property type="entry name" value="SAM-dependent_MTases_sf"/>
</dbReference>
<dbReference type="InterPro" id="IPR011869">
    <property type="entry name" value="TrmA_MeTrfase"/>
</dbReference>
<dbReference type="InterPro" id="IPR010280">
    <property type="entry name" value="U5_MeTrfase_fam"/>
</dbReference>
<dbReference type="NCBIfam" id="TIGR02143">
    <property type="entry name" value="trmA_only"/>
    <property type="match status" value="1"/>
</dbReference>
<dbReference type="PANTHER" id="PTHR47790">
    <property type="entry name" value="TRNA/TMRNA (URACIL-C(5))-METHYLTRANSFERASE"/>
    <property type="match status" value="1"/>
</dbReference>
<dbReference type="PANTHER" id="PTHR47790:SF2">
    <property type="entry name" value="TRNA_TMRNA (URACIL-C(5))-METHYLTRANSFERASE"/>
    <property type="match status" value="1"/>
</dbReference>
<dbReference type="Pfam" id="PF05958">
    <property type="entry name" value="tRNA_U5-meth_tr"/>
    <property type="match status" value="1"/>
</dbReference>
<dbReference type="SUPFAM" id="SSF53335">
    <property type="entry name" value="S-adenosyl-L-methionine-dependent methyltransferases"/>
    <property type="match status" value="1"/>
</dbReference>
<dbReference type="PROSITE" id="PS51687">
    <property type="entry name" value="SAM_MT_RNA_M5U"/>
    <property type="match status" value="1"/>
</dbReference>
<dbReference type="PROSITE" id="PS01230">
    <property type="entry name" value="TRMA_1"/>
    <property type="match status" value="1"/>
</dbReference>
<dbReference type="PROSITE" id="PS01231">
    <property type="entry name" value="TRMA_2"/>
    <property type="match status" value="1"/>
</dbReference>
<reference key="1">
    <citation type="journal article" date="2001" name="Nature">
        <title>Genome sequence of enterohaemorrhagic Escherichia coli O157:H7.</title>
        <authorList>
            <person name="Perna N.T."/>
            <person name="Plunkett G. III"/>
            <person name="Burland V."/>
            <person name="Mau B."/>
            <person name="Glasner J.D."/>
            <person name="Rose D.J."/>
            <person name="Mayhew G.F."/>
            <person name="Evans P.S."/>
            <person name="Gregor J."/>
            <person name="Kirkpatrick H.A."/>
            <person name="Posfai G."/>
            <person name="Hackett J."/>
            <person name="Klink S."/>
            <person name="Boutin A."/>
            <person name="Shao Y."/>
            <person name="Miller L."/>
            <person name="Grotbeck E.J."/>
            <person name="Davis N.W."/>
            <person name="Lim A."/>
            <person name="Dimalanta E.T."/>
            <person name="Potamousis K."/>
            <person name="Apodaca J."/>
            <person name="Anantharaman T.S."/>
            <person name="Lin J."/>
            <person name="Yen G."/>
            <person name="Schwartz D.C."/>
            <person name="Welch R.A."/>
            <person name="Blattner F.R."/>
        </authorList>
    </citation>
    <scope>NUCLEOTIDE SEQUENCE [LARGE SCALE GENOMIC DNA]</scope>
    <source>
        <strain>O157:H7 / EDL933 / ATCC 700927 / EHEC</strain>
    </source>
</reference>
<reference key="2">
    <citation type="journal article" date="2001" name="DNA Res.">
        <title>Complete genome sequence of enterohemorrhagic Escherichia coli O157:H7 and genomic comparison with a laboratory strain K-12.</title>
        <authorList>
            <person name="Hayashi T."/>
            <person name="Makino K."/>
            <person name="Ohnishi M."/>
            <person name="Kurokawa K."/>
            <person name="Ishii K."/>
            <person name="Yokoyama K."/>
            <person name="Han C.-G."/>
            <person name="Ohtsubo E."/>
            <person name="Nakayama K."/>
            <person name="Murata T."/>
            <person name="Tanaka M."/>
            <person name="Tobe T."/>
            <person name="Iida T."/>
            <person name="Takami H."/>
            <person name="Honda T."/>
            <person name="Sasakawa C."/>
            <person name="Ogasawara N."/>
            <person name="Yasunaga T."/>
            <person name="Kuhara S."/>
            <person name="Shiba T."/>
            <person name="Hattori M."/>
            <person name="Shinagawa H."/>
        </authorList>
    </citation>
    <scope>NUCLEOTIDE SEQUENCE [LARGE SCALE GENOMIC DNA]</scope>
    <source>
        <strain>O157:H7 / Sakai / RIMD 0509952 / EHEC</strain>
    </source>
</reference>
<accession>Q8X723</accession>